<keyword id="KW-0002">3D-structure</keyword>
<keyword id="KW-0963">Cytoplasm</keyword>
<keyword id="KW-0903">Direct protein sequencing</keyword>
<keyword id="KW-0378">Hydrolase</keyword>
<keyword id="KW-0479">Metal-binding</keyword>
<keyword id="KW-0539">Nucleus</keyword>
<keyword id="KW-1185">Reference proteome</keyword>
<keyword id="KW-0862">Zinc</keyword>
<dbReference type="EC" id="3.5.1.15" evidence="2"/>
<dbReference type="EMBL" id="AB023432">
    <property type="protein sequence ID" value="BAA82801.1"/>
    <property type="molecule type" value="mRNA"/>
</dbReference>
<dbReference type="EMBL" id="BC078813">
    <property type="protein sequence ID" value="AAH78813.1"/>
    <property type="molecule type" value="mRNA"/>
</dbReference>
<dbReference type="EMBL" id="BC078814">
    <property type="protein sequence ID" value="AAH78814.1"/>
    <property type="molecule type" value="mRNA"/>
</dbReference>
<dbReference type="RefSeq" id="NP_077375.2">
    <property type="nucleotide sequence ID" value="NM_024399.2"/>
</dbReference>
<dbReference type="RefSeq" id="XP_006246877.1">
    <property type="nucleotide sequence ID" value="XM_006246815.3"/>
</dbReference>
<dbReference type="RefSeq" id="XP_038942843.1">
    <property type="nucleotide sequence ID" value="XM_039086915.2"/>
</dbReference>
<dbReference type="RefSeq" id="XP_038942844.1">
    <property type="nucleotide sequence ID" value="XM_039086916.2"/>
</dbReference>
<dbReference type="PDB" id="2GU2">
    <property type="method" value="X-ray"/>
    <property type="resolution" value="1.80 A"/>
    <property type="chains" value="A/B=2-312"/>
</dbReference>
<dbReference type="PDB" id="2Q4Z">
    <property type="method" value="X-ray"/>
    <property type="resolution" value="1.80 A"/>
    <property type="chains" value="A/B=2-312"/>
</dbReference>
<dbReference type="PDBsum" id="2GU2"/>
<dbReference type="PDBsum" id="2Q4Z"/>
<dbReference type="SMR" id="Q9R1T5"/>
<dbReference type="DIP" id="DIP-60794N"/>
<dbReference type="FunCoup" id="Q9R1T5">
    <property type="interactions" value="79"/>
</dbReference>
<dbReference type="STRING" id="10116.ENSRNOP00000072876"/>
<dbReference type="iPTMnet" id="Q9R1T5"/>
<dbReference type="PhosphoSitePlus" id="Q9R1T5"/>
<dbReference type="SwissPalm" id="Q9R1T5"/>
<dbReference type="PaxDb" id="10116-ENSRNOP00000050760"/>
<dbReference type="Ensembl" id="ENSRNOT00000084432.3">
    <property type="protein sequence ID" value="ENSRNOP00000072876.1"/>
    <property type="gene ID" value="ENSRNOG00000019659.9"/>
</dbReference>
<dbReference type="GeneID" id="79251"/>
<dbReference type="KEGG" id="rno:79251"/>
<dbReference type="AGR" id="RGD:621693"/>
<dbReference type="CTD" id="443"/>
<dbReference type="RGD" id="621693">
    <property type="gene designation" value="Aspa"/>
</dbReference>
<dbReference type="eggNOG" id="ENOG502QRAK">
    <property type="taxonomic scope" value="Eukaryota"/>
</dbReference>
<dbReference type="GeneTree" id="ENSGT00390000001189"/>
<dbReference type="HOGENOM" id="CLU_083292_0_0_1"/>
<dbReference type="InParanoid" id="Q9R1T5"/>
<dbReference type="OMA" id="THGNEIN"/>
<dbReference type="BRENDA" id="3.5.1.15">
    <property type="organism ID" value="5301"/>
</dbReference>
<dbReference type="Reactome" id="R-RNO-8963693">
    <property type="pathway name" value="Aspartate and asparagine metabolism"/>
</dbReference>
<dbReference type="EvolutionaryTrace" id="Q9R1T5"/>
<dbReference type="PRO" id="PR:Q9R1T5"/>
<dbReference type="Proteomes" id="UP000002494">
    <property type="component" value="Chromosome 10"/>
</dbReference>
<dbReference type="Bgee" id="ENSRNOG00000019659">
    <property type="expression patterns" value="Expressed in kidney and 20 other cell types or tissues"/>
</dbReference>
<dbReference type="ExpressionAtlas" id="Q9R1T5">
    <property type="expression patterns" value="baseline and differential"/>
</dbReference>
<dbReference type="GO" id="GO:0005829">
    <property type="term" value="C:cytosol"/>
    <property type="evidence" value="ECO:0000266"/>
    <property type="project" value="RGD"/>
</dbReference>
<dbReference type="GO" id="GO:0005634">
    <property type="term" value="C:nucleus"/>
    <property type="evidence" value="ECO:0007669"/>
    <property type="project" value="UniProtKB-SubCell"/>
</dbReference>
<dbReference type="GO" id="GO:0019807">
    <property type="term" value="F:aspartoacylase activity"/>
    <property type="evidence" value="ECO:0000250"/>
    <property type="project" value="UniProtKB"/>
</dbReference>
<dbReference type="GO" id="GO:0016811">
    <property type="term" value="F:hydrolase activity, acting on carbon-nitrogen (but not peptide) bonds, in linear amides"/>
    <property type="evidence" value="ECO:0000318"/>
    <property type="project" value="GO_Central"/>
</dbReference>
<dbReference type="GO" id="GO:0016788">
    <property type="term" value="F:hydrolase activity, acting on ester bonds"/>
    <property type="evidence" value="ECO:0007669"/>
    <property type="project" value="InterPro"/>
</dbReference>
<dbReference type="GO" id="GO:0042802">
    <property type="term" value="F:identical protein binding"/>
    <property type="evidence" value="ECO:0000353"/>
    <property type="project" value="IntAct"/>
</dbReference>
<dbReference type="GO" id="GO:0046872">
    <property type="term" value="F:metal ion binding"/>
    <property type="evidence" value="ECO:0007669"/>
    <property type="project" value="UniProtKB-KW"/>
</dbReference>
<dbReference type="GO" id="GO:0006083">
    <property type="term" value="P:acetate metabolic process"/>
    <property type="evidence" value="ECO:0000266"/>
    <property type="project" value="RGD"/>
</dbReference>
<dbReference type="GO" id="GO:0006531">
    <property type="term" value="P:aspartate metabolic process"/>
    <property type="evidence" value="ECO:0000266"/>
    <property type="project" value="RGD"/>
</dbReference>
<dbReference type="GO" id="GO:0022010">
    <property type="term" value="P:central nervous system myelination"/>
    <property type="evidence" value="ECO:0000270"/>
    <property type="project" value="RGD"/>
</dbReference>
<dbReference type="GO" id="GO:0048714">
    <property type="term" value="P:positive regulation of oligodendrocyte differentiation"/>
    <property type="evidence" value="ECO:0000315"/>
    <property type="project" value="RGD"/>
</dbReference>
<dbReference type="CDD" id="cd06909">
    <property type="entry name" value="M14_ASPA"/>
    <property type="match status" value="1"/>
</dbReference>
<dbReference type="FunFam" id="2.20.25.160:FF:000001">
    <property type="entry name" value="Aspartoacylase"/>
    <property type="match status" value="1"/>
</dbReference>
<dbReference type="FunFam" id="3.40.630.10:FF:000025">
    <property type="entry name" value="aspartoacylase"/>
    <property type="match status" value="1"/>
</dbReference>
<dbReference type="Gene3D" id="2.20.25.160">
    <property type="match status" value="1"/>
</dbReference>
<dbReference type="Gene3D" id="3.40.630.10">
    <property type="entry name" value="Zn peptidases"/>
    <property type="match status" value="1"/>
</dbReference>
<dbReference type="HAMAP" id="MF_00704">
    <property type="entry name" value="Aspartoacylase"/>
    <property type="match status" value="1"/>
</dbReference>
<dbReference type="InterPro" id="IPR050178">
    <property type="entry name" value="AspA/AstE_fam"/>
</dbReference>
<dbReference type="InterPro" id="IPR016708">
    <property type="entry name" value="Aspartoacylase"/>
</dbReference>
<dbReference type="InterPro" id="IPR055438">
    <property type="entry name" value="AstE_AspA_cat"/>
</dbReference>
<dbReference type="InterPro" id="IPR007036">
    <property type="entry name" value="Aste_AspA_hybrid_dom"/>
</dbReference>
<dbReference type="NCBIfam" id="NF002601">
    <property type="entry name" value="PRK02259.1"/>
    <property type="match status" value="1"/>
</dbReference>
<dbReference type="PANTHER" id="PTHR15162">
    <property type="entry name" value="ASPARTOACYLASE"/>
    <property type="match status" value="1"/>
</dbReference>
<dbReference type="PANTHER" id="PTHR15162:SF9">
    <property type="entry name" value="ASPARTOACYLASE"/>
    <property type="match status" value="1"/>
</dbReference>
<dbReference type="Pfam" id="PF24827">
    <property type="entry name" value="AstE_AspA_cat"/>
    <property type="match status" value="1"/>
</dbReference>
<dbReference type="Pfam" id="PF04952">
    <property type="entry name" value="AstE_AspA_hybrid"/>
    <property type="match status" value="1"/>
</dbReference>
<dbReference type="PIRSF" id="PIRSF018001">
    <property type="entry name" value="Aspartoacylase"/>
    <property type="match status" value="1"/>
</dbReference>
<dbReference type="SUPFAM" id="SSF53187">
    <property type="entry name" value="Zn-dependent exopeptidases"/>
    <property type="match status" value="1"/>
</dbReference>
<accession>Q9R1T5</accession>
<accession>Q6AZ03</accession>
<sequence length="312" mass="35314">MTSCVAEEPIKKIAIFGGTHGNELTGVFLVTHWLKNGAEVHRAGLEVKPFITNPRAVEKCTRYIDCDLNRVFDLENLSKEMSEDLPYEVRRAQEINHLFGPKNSDDAYDVVFDLHNTTSNMGCTLILEDSRNDFLIQMFHYIKTCMAPLPCSVYLIEHPSLKYATTRSIAKYPVGIEVGPQPHGVLRADILDQMRRMLKHALDFIQRFNEGKEFPPCAIDVYKIMEKVDYPRNESGDVAAVIHPNLQDQDWKPLHPGDPVFVSLDGKVIPLGGDCTVYPVFVNEAAYYEKKEAFAKTTKLTLNAKSIRSTLH</sequence>
<feature type="chain" id="PRO_0000216874" description="Aspartoacylase">
    <location>
        <begin position="1"/>
        <end position="312"/>
    </location>
</feature>
<feature type="active site" description="Proton donor/acceptor" evidence="1">
    <location>
        <position position="177"/>
    </location>
</feature>
<feature type="binding site" evidence="3 9">
    <location>
        <position position="20"/>
    </location>
    <ligand>
        <name>Zn(2+)</name>
        <dbReference type="ChEBI" id="CHEBI:29105"/>
    </ligand>
</feature>
<feature type="binding site" evidence="3 9">
    <location>
        <position position="23"/>
    </location>
    <ligand>
        <name>Zn(2+)</name>
        <dbReference type="ChEBI" id="CHEBI:29105"/>
    </ligand>
</feature>
<feature type="binding site" evidence="1">
    <location>
        <position position="62"/>
    </location>
    <ligand>
        <name>N-acetyl-L-aspartate</name>
        <dbReference type="ChEBI" id="CHEBI:16953"/>
    </ligand>
</feature>
<feature type="binding site" evidence="1">
    <location>
        <position position="69"/>
    </location>
    <ligand>
        <name>N-acetyl-L-aspartate</name>
        <dbReference type="ChEBI" id="CHEBI:16953"/>
    </ligand>
</feature>
<feature type="binding site" evidence="1">
    <location>
        <position position="70"/>
    </location>
    <ligand>
        <name>N-acetyl-L-aspartate</name>
        <dbReference type="ChEBI" id="CHEBI:16953"/>
    </ligand>
</feature>
<feature type="binding site" evidence="3 9">
    <location>
        <position position="115"/>
    </location>
    <ligand>
        <name>Zn(2+)</name>
        <dbReference type="ChEBI" id="CHEBI:29105"/>
    </ligand>
</feature>
<feature type="binding site" evidence="1">
    <location>
        <position position="163"/>
    </location>
    <ligand>
        <name>N-acetyl-L-aspartate</name>
        <dbReference type="ChEBI" id="CHEBI:16953"/>
    </ligand>
</feature>
<feature type="binding site" evidence="1">
    <location>
        <position position="167"/>
    </location>
    <ligand>
        <name>N-acetyl-L-aspartate</name>
        <dbReference type="ChEBI" id="CHEBI:16953"/>
    </ligand>
</feature>
<feature type="binding site" evidence="1">
    <location>
        <position position="287"/>
    </location>
    <ligand>
        <name>N-acetyl-L-aspartate</name>
        <dbReference type="ChEBI" id="CHEBI:16953"/>
    </ligand>
</feature>
<feature type="site" description="Transition state stabilizer" evidence="1">
    <location>
        <position position="62"/>
    </location>
</feature>
<feature type="sequence conflict" description="In Ref. 1; BAA82801." evidence="5" ref="1">
    <original>N</original>
    <variation>D</variation>
    <location>
        <position position="103"/>
    </location>
</feature>
<feature type="sequence conflict" description="In Ref. 1; BAA82801." evidence="5" ref="1">
    <original>D</original>
    <variation>V</variation>
    <location>
        <position position="113"/>
    </location>
</feature>
<feature type="sequence conflict" description="In Ref. 1; BAA82801." evidence="5" ref="1">
    <original>P</original>
    <variation>H</variation>
    <location>
        <position position="182"/>
    </location>
</feature>
<feature type="sequence conflict" description="In Ref. 1; BAA82801." evidence="5" ref="1">
    <original>Q</original>
    <variation>QLQ</variation>
    <location>
        <position position="247"/>
    </location>
</feature>
<feature type="strand" evidence="10">
    <location>
        <begin position="5"/>
        <end position="7"/>
    </location>
</feature>
<feature type="strand" evidence="11">
    <location>
        <begin position="13"/>
        <end position="17"/>
    </location>
</feature>
<feature type="helix" evidence="11">
    <location>
        <begin position="24"/>
        <end position="35"/>
    </location>
</feature>
<feature type="helix" evidence="11">
    <location>
        <begin position="38"/>
        <end position="40"/>
    </location>
</feature>
<feature type="strand" evidence="11">
    <location>
        <begin position="48"/>
        <end position="52"/>
    </location>
</feature>
<feature type="helix" evidence="11">
    <location>
        <begin position="54"/>
        <end position="59"/>
    </location>
</feature>
<feature type="strand" evidence="11">
    <location>
        <begin position="64"/>
        <end position="66"/>
    </location>
</feature>
<feature type="helix" evidence="11">
    <location>
        <begin position="68"/>
        <end position="70"/>
    </location>
</feature>
<feature type="helix" evidence="11">
    <location>
        <begin position="74"/>
        <end position="77"/>
    </location>
</feature>
<feature type="helix" evidence="11">
    <location>
        <begin position="87"/>
        <end position="99"/>
    </location>
</feature>
<feature type="strand" evidence="11">
    <location>
        <begin position="109"/>
        <end position="116"/>
    </location>
</feature>
<feature type="strand" evidence="10">
    <location>
        <begin position="118"/>
        <end position="120"/>
    </location>
</feature>
<feature type="strand" evidence="11">
    <location>
        <begin position="123"/>
        <end position="128"/>
    </location>
</feature>
<feature type="helix" evidence="11">
    <location>
        <begin position="133"/>
        <end position="146"/>
    </location>
</feature>
<feature type="strand" evidence="11">
    <location>
        <begin position="151"/>
        <end position="155"/>
    </location>
</feature>
<feature type="helix" evidence="11">
    <location>
        <begin position="160"/>
        <end position="163"/>
    </location>
</feature>
<feature type="helix" evidence="11">
    <location>
        <begin position="166"/>
        <end position="169"/>
    </location>
</feature>
<feature type="strand" evidence="11">
    <location>
        <begin position="170"/>
        <end position="178"/>
    </location>
</feature>
<feature type="helix" evidence="11">
    <location>
        <begin position="188"/>
        <end position="209"/>
    </location>
</feature>
<feature type="strand" evidence="11">
    <location>
        <begin position="217"/>
        <end position="228"/>
    </location>
</feature>
<feature type="strand" evidence="10">
    <location>
        <begin position="236"/>
        <end position="238"/>
    </location>
</feature>
<feature type="strand" evidence="10">
    <location>
        <begin position="240"/>
        <end position="242"/>
    </location>
</feature>
<feature type="turn" evidence="11">
    <location>
        <begin position="244"/>
        <end position="248"/>
    </location>
</feature>
<feature type="strand" evidence="11">
    <location>
        <begin position="258"/>
        <end position="262"/>
    </location>
</feature>
<feature type="strand" evidence="11">
    <location>
        <begin position="268"/>
        <end position="270"/>
    </location>
</feature>
<feature type="strand" evidence="10">
    <location>
        <begin position="273"/>
        <end position="275"/>
    </location>
</feature>
<feature type="strand" evidence="11">
    <location>
        <begin position="277"/>
        <end position="281"/>
    </location>
</feature>
<feature type="helix" evidence="10">
    <location>
        <begin position="285"/>
        <end position="287"/>
    </location>
</feature>
<feature type="turn" evidence="11">
    <location>
        <begin position="288"/>
        <end position="291"/>
    </location>
</feature>
<feature type="strand" evidence="11">
    <location>
        <begin position="293"/>
        <end position="304"/>
    </location>
</feature>
<feature type="strand" evidence="10">
    <location>
        <begin position="307"/>
        <end position="309"/>
    </location>
</feature>
<gene>
    <name evidence="8" type="primary">Aspa</name>
</gene>
<name>ACY2_RAT</name>
<reference key="1">
    <citation type="submission" date="1999-02" db="EMBL/GenBank/DDBJ databases">
        <title>Full length rat cDNA coding for aspartoacylase.</title>
        <authorList>
            <person name="Kitada K."/>
            <person name="Serikawa T."/>
        </authorList>
    </citation>
    <scope>NUCLEOTIDE SEQUENCE [MRNA]</scope>
    <source>
        <strain>WTC</strain>
        <tissue>Brain</tissue>
    </source>
</reference>
<reference key="2">
    <citation type="journal article" date="2004" name="Genome Res.">
        <title>The status, quality, and expansion of the NIH full-length cDNA project: the Mammalian Gene Collection (MGC).</title>
        <authorList>
            <consortium name="The MGC Project Team"/>
        </authorList>
    </citation>
    <scope>NUCLEOTIDE SEQUENCE [LARGE SCALE MRNA]</scope>
    <source>
        <tissue>Kidney</tissue>
        <tissue>Testis</tissue>
    </source>
</reference>
<reference key="3">
    <citation type="submission" date="2006-11" db="UniProtKB">
        <authorList>
            <person name="Lubec G."/>
            <person name="Afjehi-Sadat L."/>
        </authorList>
    </citation>
    <scope>PROTEIN SEQUENCE OF 43-55; 132-143 AND 172-187</scope>
    <scope>IDENTIFICATION BY MASS SPECTROMETRY</scope>
    <source>
        <strain>Sprague-Dawley</strain>
        <tissue>Spinal cord</tissue>
    </source>
</reference>
<reference key="4">
    <citation type="journal article" date="2006" name="FASEB J.">
        <title>Aspartoacylase is a regulated nuclear-cytoplasmic enzyme.</title>
        <authorList>
            <person name="Hershfield J.R."/>
            <person name="Madhavarao C.N."/>
            <person name="Moffett J.R."/>
            <person name="Benjamins J.A."/>
            <person name="Garbern J.Y."/>
            <person name="Namboodiri A."/>
        </authorList>
    </citation>
    <scope>FUNCTION</scope>
    <scope>SUBCELLULAR LOCATION</scope>
    <scope>CATALYTIC ACTIVITY</scope>
    <scope>TISSUE SPECIFICITY</scope>
</reference>
<reference evidence="9" key="5">
    <citation type="journal article" date="2007" name="Proc. Natl. Acad. Sci. U.S.A.">
        <title>Structure of aspartoacylase, the brain enzyme impaired in Canavan disease.</title>
        <authorList>
            <person name="Bitto E."/>
            <person name="Bingman C.A."/>
            <person name="Wesenberg G.E."/>
            <person name="McCoy J.G."/>
            <person name="Phillips G.N. Jr."/>
        </authorList>
    </citation>
    <scope>X-RAY CRYSTALLOGRAPHY (1.8 ANGSTROMS) IN COMPLEX WITH ZINC IONS</scope>
    <scope>SUBUNIT</scope>
    <scope>COFACTOR</scope>
</reference>
<comment type="function">
    <text evidence="2">Catalyzes the deacetylation of N-acetylaspartic acid (NAA) to produce acetate and L-aspartate. NAA occurs in high concentration in brain and its hydrolysis NAA plays a significant part in the maintenance of intact white matter. In other tissues it acts as a scavenger of NAA from body fluids.</text>
</comment>
<comment type="catalytic activity">
    <reaction evidence="2">
        <text>an N-acyl-L-aspartate + H2O = a carboxylate + L-aspartate</text>
        <dbReference type="Rhea" id="RHEA:10872"/>
        <dbReference type="ChEBI" id="CHEBI:15377"/>
        <dbReference type="ChEBI" id="CHEBI:29067"/>
        <dbReference type="ChEBI" id="CHEBI:29991"/>
        <dbReference type="ChEBI" id="CHEBI:58497"/>
        <dbReference type="EC" id="3.5.1.15"/>
    </reaction>
    <physiologicalReaction direction="left-to-right" evidence="6">
        <dbReference type="Rhea" id="RHEA:10873"/>
    </physiologicalReaction>
</comment>
<comment type="catalytic activity">
    <reaction evidence="1">
        <text>N-acetyl-L-aspartate + H2O = L-aspartate + acetate</text>
        <dbReference type="Rhea" id="RHEA:59408"/>
        <dbReference type="ChEBI" id="CHEBI:15377"/>
        <dbReference type="ChEBI" id="CHEBI:16953"/>
        <dbReference type="ChEBI" id="CHEBI:29991"/>
        <dbReference type="ChEBI" id="CHEBI:30089"/>
    </reaction>
    <physiologicalReaction direction="left-to-right" evidence="1">
        <dbReference type="Rhea" id="RHEA:59409"/>
    </physiologicalReaction>
</comment>
<comment type="cofactor">
    <cofactor evidence="3">
        <name>Zn(2+)</name>
        <dbReference type="ChEBI" id="CHEBI:29105"/>
    </cofactor>
    <text evidence="3">Binds 1 zinc ion per subunit.</text>
</comment>
<comment type="subunit">
    <text evidence="7">Homodimer.</text>
</comment>
<comment type="interaction">
    <interactant intactId="EBI-15617537">
        <id>Q9R1T5</id>
    </interactant>
    <interactant intactId="EBI-15617537">
        <id>Q9R1T5</id>
        <label>Aspa</label>
    </interactant>
    <organismsDiffer>false</organismsDiffer>
    <experiments>2</experiments>
</comment>
<comment type="subcellular location">
    <subcellularLocation>
        <location evidence="2">Cytoplasm</location>
    </subcellularLocation>
    <subcellularLocation>
        <location evidence="2">Nucleus</location>
    </subcellularLocation>
</comment>
<comment type="tissue specificity">
    <text evidence="2">Detected in kidney proximal tubule cells (at protein level).</text>
</comment>
<comment type="similarity">
    <text evidence="5">Belongs to the AspA/AstE family. Aspartoacylase subfamily.</text>
</comment>
<protein>
    <recommendedName>
        <fullName evidence="4">Aspartoacylase</fullName>
        <ecNumber evidence="2">3.5.1.15</ecNumber>
    </recommendedName>
    <alternativeName>
        <fullName>Aminoacylase-2</fullName>
        <shortName>ACY-2</shortName>
    </alternativeName>
</protein>
<evidence type="ECO:0000250" key="1">
    <source>
        <dbReference type="UniProtKB" id="P45381"/>
    </source>
</evidence>
<evidence type="ECO:0000269" key="2">
    <source>
    </source>
</evidence>
<evidence type="ECO:0000269" key="3">
    <source>
    </source>
</evidence>
<evidence type="ECO:0000303" key="4">
    <source>
    </source>
</evidence>
<evidence type="ECO:0000305" key="5"/>
<evidence type="ECO:0000305" key="6">
    <source>
    </source>
</evidence>
<evidence type="ECO:0000305" key="7">
    <source>
    </source>
</evidence>
<evidence type="ECO:0000312" key="8">
    <source>
        <dbReference type="RGD" id="621693"/>
    </source>
</evidence>
<evidence type="ECO:0007744" key="9">
    <source>
        <dbReference type="PDB" id="2GU2"/>
    </source>
</evidence>
<evidence type="ECO:0007829" key="10">
    <source>
        <dbReference type="PDB" id="2GU2"/>
    </source>
</evidence>
<evidence type="ECO:0007829" key="11">
    <source>
        <dbReference type="PDB" id="2Q4Z"/>
    </source>
</evidence>
<organism>
    <name type="scientific">Rattus norvegicus</name>
    <name type="common">Rat</name>
    <dbReference type="NCBI Taxonomy" id="10116"/>
    <lineage>
        <taxon>Eukaryota</taxon>
        <taxon>Metazoa</taxon>
        <taxon>Chordata</taxon>
        <taxon>Craniata</taxon>
        <taxon>Vertebrata</taxon>
        <taxon>Euteleostomi</taxon>
        <taxon>Mammalia</taxon>
        <taxon>Eutheria</taxon>
        <taxon>Euarchontoglires</taxon>
        <taxon>Glires</taxon>
        <taxon>Rodentia</taxon>
        <taxon>Myomorpha</taxon>
        <taxon>Muroidea</taxon>
        <taxon>Muridae</taxon>
        <taxon>Murinae</taxon>
        <taxon>Rattus</taxon>
    </lineage>
</organism>
<proteinExistence type="evidence at protein level"/>